<name>MEND_PROMH</name>
<accession>B4EZ42</accession>
<sequence length="561" mass="61520">MSNSSFNRQWAKVILETLTRHGLRHICIAPGSRSTPLTLAAAANHKLICHTHFDERGLGHLALGLAKATQQPVAVIVTSGTAVANLYPALIEAGLTGERVIFLTADRPPELINCGANQAIRQQGIFASHPSETLSLPRPTADISARWLVSTLDNAMNNLVHGALHVNCPFAEPLYGDDIEHDTPWTQALGKWWQSDKPWLQETLSPSVTTHPQWDRLRQKKGVVIAGRISAKEGIAVAKWASKLGWPLLGDVLSQTGQPLPCADLWLNNPQVKAELNQAEIVIQFGSSLTGKRLLQWQANCSPQMYWVIDAIPGRLDPGHHQGEKFTLSPSQWLTAHPAIDNLPWALSLSHIATQTYQHVTEVTDYFGEAQVAHQLDHLLPHNGQLFVGNSLIVRLIDAFAQLPQGYPVMSNRGASGIDGLLSTSAGVHRATQKPTLTILGDLSALYDLNSLALHQQVYAPNVVIIVNNNGGQIFSMLPTPMAERERFYCMPHALNFKHAAAMFGLDYVAPNCWDDLFTTVTACWQGEAKTTLIELIVNETEGAETLNQLVKQVTAYDFSL</sequence>
<comment type="function">
    <text evidence="1">Catalyzes the thiamine diphosphate-dependent decarboxylation of 2-oxoglutarate and the subsequent addition of the resulting succinic semialdehyde-thiamine pyrophosphate anion to isochorismate to yield 2-succinyl-5-enolpyruvyl-6-hydroxy-3-cyclohexene-1-carboxylate (SEPHCHC).</text>
</comment>
<comment type="catalytic activity">
    <reaction evidence="1">
        <text>isochorismate + 2-oxoglutarate + H(+) = 5-enolpyruvoyl-6-hydroxy-2-succinyl-cyclohex-3-ene-1-carboxylate + CO2</text>
        <dbReference type="Rhea" id="RHEA:25593"/>
        <dbReference type="ChEBI" id="CHEBI:15378"/>
        <dbReference type="ChEBI" id="CHEBI:16526"/>
        <dbReference type="ChEBI" id="CHEBI:16810"/>
        <dbReference type="ChEBI" id="CHEBI:29780"/>
        <dbReference type="ChEBI" id="CHEBI:58818"/>
        <dbReference type="EC" id="2.2.1.9"/>
    </reaction>
</comment>
<comment type="cofactor">
    <cofactor evidence="1">
        <name>Mg(2+)</name>
        <dbReference type="ChEBI" id="CHEBI:18420"/>
    </cofactor>
    <cofactor evidence="1">
        <name>Mn(2+)</name>
        <dbReference type="ChEBI" id="CHEBI:29035"/>
    </cofactor>
</comment>
<comment type="cofactor">
    <cofactor evidence="1">
        <name>thiamine diphosphate</name>
        <dbReference type="ChEBI" id="CHEBI:58937"/>
    </cofactor>
    <text evidence="1">Binds 1 thiamine pyrophosphate per subunit.</text>
</comment>
<comment type="pathway">
    <text evidence="1">Quinol/quinone metabolism; 1,4-dihydroxy-2-naphthoate biosynthesis; 1,4-dihydroxy-2-naphthoate from chorismate: step 2/7.</text>
</comment>
<comment type="pathway">
    <text evidence="1">Quinol/quinone metabolism; menaquinone biosynthesis.</text>
</comment>
<comment type="subunit">
    <text evidence="1">Homodimer.</text>
</comment>
<comment type="similarity">
    <text evidence="1">Belongs to the TPP enzyme family. MenD subfamily.</text>
</comment>
<protein>
    <recommendedName>
        <fullName evidence="1">2-succinyl-5-enolpyruvyl-6-hydroxy-3-cyclohexene-1-carboxylate synthase</fullName>
        <shortName evidence="1">SEPHCHC synthase</shortName>
        <ecNumber evidence="1">2.2.1.9</ecNumber>
    </recommendedName>
    <alternativeName>
        <fullName evidence="1">Menaquinone biosynthesis protein MenD</fullName>
    </alternativeName>
</protein>
<feature type="chain" id="PRO_1000187086" description="2-succinyl-5-enolpyruvyl-6-hydroxy-3-cyclohexene-1-carboxylate synthase">
    <location>
        <begin position="1"/>
        <end position="561"/>
    </location>
</feature>
<evidence type="ECO:0000255" key="1">
    <source>
        <dbReference type="HAMAP-Rule" id="MF_01659"/>
    </source>
</evidence>
<dbReference type="EC" id="2.2.1.9" evidence="1"/>
<dbReference type="EMBL" id="AM942759">
    <property type="protein sequence ID" value="CAR43639.1"/>
    <property type="molecule type" value="Genomic_DNA"/>
</dbReference>
<dbReference type="RefSeq" id="WP_012368098.1">
    <property type="nucleotide sequence ID" value="NC_010554.1"/>
</dbReference>
<dbReference type="SMR" id="B4EZ42"/>
<dbReference type="EnsemblBacteria" id="CAR43639">
    <property type="protein sequence ID" value="CAR43639"/>
    <property type="gene ID" value="PMI1745"/>
</dbReference>
<dbReference type="GeneID" id="6802341"/>
<dbReference type="KEGG" id="pmr:PMI1745"/>
<dbReference type="PATRIC" id="fig|529507.6.peg.1695"/>
<dbReference type="eggNOG" id="COG1165">
    <property type="taxonomic scope" value="Bacteria"/>
</dbReference>
<dbReference type="HOGENOM" id="CLU_006051_3_0_6"/>
<dbReference type="UniPathway" id="UPA00079"/>
<dbReference type="UniPathway" id="UPA01057">
    <property type="reaction ID" value="UER00164"/>
</dbReference>
<dbReference type="Proteomes" id="UP000008319">
    <property type="component" value="Chromosome"/>
</dbReference>
<dbReference type="GO" id="GO:0070204">
    <property type="term" value="F:2-succinyl-5-enolpyruvyl-6-hydroxy-3-cyclohexene-1-carboxylic-acid synthase activity"/>
    <property type="evidence" value="ECO:0007669"/>
    <property type="project" value="UniProtKB-UniRule"/>
</dbReference>
<dbReference type="GO" id="GO:0000287">
    <property type="term" value="F:magnesium ion binding"/>
    <property type="evidence" value="ECO:0007669"/>
    <property type="project" value="UniProtKB-UniRule"/>
</dbReference>
<dbReference type="GO" id="GO:0030145">
    <property type="term" value="F:manganese ion binding"/>
    <property type="evidence" value="ECO:0007669"/>
    <property type="project" value="UniProtKB-UniRule"/>
</dbReference>
<dbReference type="GO" id="GO:0030976">
    <property type="term" value="F:thiamine pyrophosphate binding"/>
    <property type="evidence" value="ECO:0007669"/>
    <property type="project" value="UniProtKB-UniRule"/>
</dbReference>
<dbReference type="GO" id="GO:0009234">
    <property type="term" value="P:menaquinone biosynthetic process"/>
    <property type="evidence" value="ECO:0007669"/>
    <property type="project" value="UniProtKB-UniRule"/>
</dbReference>
<dbReference type="CDD" id="cd07037">
    <property type="entry name" value="TPP_PYR_MenD"/>
    <property type="match status" value="1"/>
</dbReference>
<dbReference type="CDD" id="cd02009">
    <property type="entry name" value="TPP_SHCHC_synthase"/>
    <property type="match status" value="1"/>
</dbReference>
<dbReference type="FunFam" id="3.40.50.970:FF:000029">
    <property type="entry name" value="2-succinyl-5-enolpyruvyl-6-hydroxy-3-cyclohexene-1-carboxylate synthase"/>
    <property type="match status" value="1"/>
</dbReference>
<dbReference type="Gene3D" id="3.40.50.970">
    <property type="match status" value="2"/>
</dbReference>
<dbReference type="Gene3D" id="3.40.50.1220">
    <property type="entry name" value="TPP-binding domain"/>
    <property type="match status" value="1"/>
</dbReference>
<dbReference type="HAMAP" id="MF_01659">
    <property type="entry name" value="MenD"/>
    <property type="match status" value="1"/>
</dbReference>
<dbReference type="InterPro" id="IPR004433">
    <property type="entry name" value="MenaQ_synth_MenD"/>
</dbReference>
<dbReference type="InterPro" id="IPR032264">
    <property type="entry name" value="MenD_middle"/>
</dbReference>
<dbReference type="InterPro" id="IPR029061">
    <property type="entry name" value="THDP-binding"/>
</dbReference>
<dbReference type="InterPro" id="IPR012001">
    <property type="entry name" value="Thiamin_PyroP_enz_TPP-bd_dom"/>
</dbReference>
<dbReference type="NCBIfam" id="TIGR00173">
    <property type="entry name" value="menD"/>
    <property type="match status" value="1"/>
</dbReference>
<dbReference type="PANTHER" id="PTHR42916">
    <property type="entry name" value="2-SUCCINYL-5-ENOLPYRUVYL-6-HYDROXY-3-CYCLOHEXENE-1-CARBOXYLATE SYNTHASE"/>
    <property type="match status" value="1"/>
</dbReference>
<dbReference type="PANTHER" id="PTHR42916:SF1">
    <property type="entry name" value="PROTEIN PHYLLO, CHLOROPLASTIC"/>
    <property type="match status" value="1"/>
</dbReference>
<dbReference type="Pfam" id="PF16582">
    <property type="entry name" value="TPP_enzyme_M_2"/>
    <property type="match status" value="1"/>
</dbReference>
<dbReference type="Pfam" id="PF02776">
    <property type="entry name" value="TPP_enzyme_N"/>
    <property type="match status" value="1"/>
</dbReference>
<dbReference type="PIRSF" id="PIRSF004983">
    <property type="entry name" value="MenD"/>
    <property type="match status" value="1"/>
</dbReference>
<dbReference type="SUPFAM" id="SSF52518">
    <property type="entry name" value="Thiamin diphosphate-binding fold (THDP-binding)"/>
    <property type="match status" value="2"/>
</dbReference>
<keyword id="KW-0460">Magnesium</keyword>
<keyword id="KW-0464">Manganese</keyword>
<keyword id="KW-0474">Menaquinone biosynthesis</keyword>
<keyword id="KW-0479">Metal-binding</keyword>
<keyword id="KW-1185">Reference proteome</keyword>
<keyword id="KW-0786">Thiamine pyrophosphate</keyword>
<keyword id="KW-0808">Transferase</keyword>
<proteinExistence type="inferred from homology"/>
<reference key="1">
    <citation type="journal article" date="2008" name="J. Bacteriol.">
        <title>Complete genome sequence of uropathogenic Proteus mirabilis, a master of both adherence and motility.</title>
        <authorList>
            <person name="Pearson M.M."/>
            <person name="Sebaihia M."/>
            <person name="Churcher C."/>
            <person name="Quail M.A."/>
            <person name="Seshasayee A.S."/>
            <person name="Luscombe N.M."/>
            <person name="Abdellah Z."/>
            <person name="Arrosmith C."/>
            <person name="Atkin B."/>
            <person name="Chillingworth T."/>
            <person name="Hauser H."/>
            <person name="Jagels K."/>
            <person name="Moule S."/>
            <person name="Mungall K."/>
            <person name="Norbertczak H."/>
            <person name="Rabbinowitsch E."/>
            <person name="Walker D."/>
            <person name="Whithead S."/>
            <person name="Thomson N.R."/>
            <person name="Rather P.N."/>
            <person name="Parkhill J."/>
            <person name="Mobley H.L.T."/>
        </authorList>
    </citation>
    <scope>NUCLEOTIDE SEQUENCE [LARGE SCALE GENOMIC DNA]</scope>
    <source>
        <strain>HI4320</strain>
    </source>
</reference>
<gene>
    <name evidence="1" type="primary">menD</name>
    <name type="ordered locus">PMI1745</name>
</gene>
<organism>
    <name type="scientific">Proteus mirabilis (strain HI4320)</name>
    <dbReference type="NCBI Taxonomy" id="529507"/>
    <lineage>
        <taxon>Bacteria</taxon>
        <taxon>Pseudomonadati</taxon>
        <taxon>Pseudomonadota</taxon>
        <taxon>Gammaproteobacteria</taxon>
        <taxon>Enterobacterales</taxon>
        <taxon>Morganellaceae</taxon>
        <taxon>Proteus</taxon>
    </lineage>
</organism>